<reference key="1">
    <citation type="journal article" date="2009" name="BMC Genomics">
        <title>The complete genome sequence of Staphylothermus marinus reveals differences in sulfur metabolism among heterotrophic Crenarchaeota.</title>
        <authorList>
            <person name="Anderson I.J."/>
            <person name="Dharmarajan L."/>
            <person name="Rodriguez J."/>
            <person name="Hooper S."/>
            <person name="Porat I."/>
            <person name="Ulrich L.E."/>
            <person name="Elkins J.G."/>
            <person name="Mavromatis K."/>
            <person name="Sun H."/>
            <person name="Land M."/>
            <person name="Lapidus A."/>
            <person name="Lucas S."/>
            <person name="Barry K."/>
            <person name="Huber H."/>
            <person name="Zhulin I.B."/>
            <person name="Whitman W.B."/>
            <person name="Mukhopadhyay B."/>
            <person name="Woese C."/>
            <person name="Bristow J."/>
            <person name="Kyrpides N."/>
        </authorList>
    </citation>
    <scope>NUCLEOTIDE SEQUENCE [LARGE SCALE GENOMIC DNA]</scope>
    <source>
        <strain>ATCC 43588 / DSM 3639 / JCM 9404 / F1</strain>
    </source>
</reference>
<reference key="2">
    <citation type="journal article" date="2009" name="Stand. Genomic Sci.">
        <title>Complete genome sequence of Staphylothermus marinus Stetter and Fiala 1986 type strain F1.</title>
        <authorList>
            <person name="Anderson I.J."/>
            <person name="Sun H."/>
            <person name="Lapidus A."/>
            <person name="Copeland A."/>
            <person name="Glavina Del Rio T."/>
            <person name="Tice H."/>
            <person name="Dalin E."/>
            <person name="Lucas S."/>
            <person name="Barry K."/>
            <person name="Land M."/>
            <person name="Richardson P."/>
            <person name="Huber H."/>
            <person name="Kyrpides N.C."/>
        </authorList>
    </citation>
    <scope>NUCLEOTIDE SEQUENCE [LARGE SCALE GENOMIC DNA]</scope>
    <source>
        <strain>ATCC 43588 / DSM 3639 / JCM 9404 / F1</strain>
    </source>
</reference>
<dbReference type="EC" id="2.5.1.78" evidence="1"/>
<dbReference type="EMBL" id="CP000575">
    <property type="protein sequence ID" value="ABN69595.1"/>
    <property type="molecule type" value="Genomic_DNA"/>
</dbReference>
<dbReference type="RefSeq" id="WP_011838786.1">
    <property type="nucleotide sequence ID" value="NC_009033.1"/>
</dbReference>
<dbReference type="SMR" id="A3DLT5"/>
<dbReference type="STRING" id="399550.Smar_0487"/>
<dbReference type="GeneID" id="4908000"/>
<dbReference type="KEGG" id="smr:Smar_0487"/>
<dbReference type="eggNOG" id="arCOG01323">
    <property type="taxonomic scope" value="Archaea"/>
</dbReference>
<dbReference type="HOGENOM" id="CLU_089358_3_1_2"/>
<dbReference type="OrthoDB" id="7610at2157"/>
<dbReference type="UniPathway" id="UPA00275">
    <property type="reaction ID" value="UER00404"/>
</dbReference>
<dbReference type="Proteomes" id="UP000000254">
    <property type="component" value="Chromosome"/>
</dbReference>
<dbReference type="GO" id="GO:0009349">
    <property type="term" value="C:riboflavin synthase complex"/>
    <property type="evidence" value="ECO:0007669"/>
    <property type="project" value="InterPro"/>
</dbReference>
<dbReference type="GO" id="GO:0000906">
    <property type="term" value="F:6,7-dimethyl-8-ribityllumazine synthase activity"/>
    <property type="evidence" value="ECO:0007669"/>
    <property type="project" value="UniProtKB-UniRule"/>
</dbReference>
<dbReference type="GO" id="GO:0009231">
    <property type="term" value="P:riboflavin biosynthetic process"/>
    <property type="evidence" value="ECO:0007669"/>
    <property type="project" value="UniProtKB-UniRule"/>
</dbReference>
<dbReference type="CDD" id="cd09211">
    <property type="entry name" value="Lumazine_synthase_archaeal"/>
    <property type="match status" value="1"/>
</dbReference>
<dbReference type="FunFam" id="3.40.50.960:FF:000003">
    <property type="entry name" value="6,7-dimethyl-8-ribityllumazine synthase"/>
    <property type="match status" value="1"/>
</dbReference>
<dbReference type="Gene3D" id="3.40.50.960">
    <property type="entry name" value="Lumazine/riboflavin synthase"/>
    <property type="match status" value="1"/>
</dbReference>
<dbReference type="HAMAP" id="MF_00178">
    <property type="entry name" value="Lumazine_synth"/>
    <property type="match status" value="1"/>
</dbReference>
<dbReference type="InterPro" id="IPR034964">
    <property type="entry name" value="LS"/>
</dbReference>
<dbReference type="InterPro" id="IPR002180">
    <property type="entry name" value="LS/RS"/>
</dbReference>
<dbReference type="InterPro" id="IPR036467">
    <property type="entry name" value="LS/RS_sf"/>
</dbReference>
<dbReference type="NCBIfam" id="TIGR00114">
    <property type="entry name" value="lumazine-synth"/>
    <property type="match status" value="1"/>
</dbReference>
<dbReference type="PANTHER" id="PTHR21058:SF0">
    <property type="entry name" value="6,7-DIMETHYL-8-RIBITYLLUMAZINE SYNTHASE"/>
    <property type="match status" value="1"/>
</dbReference>
<dbReference type="PANTHER" id="PTHR21058">
    <property type="entry name" value="6,7-DIMETHYL-8-RIBITYLLUMAZINE SYNTHASE DMRL SYNTHASE LUMAZINE SYNTHASE"/>
    <property type="match status" value="1"/>
</dbReference>
<dbReference type="Pfam" id="PF00885">
    <property type="entry name" value="DMRL_synthase"/>
    <property type="match status" value="1"/>
</dbReference>
<dbReference type="SUPFAM" id="SSF52121">
    <property type="entry name" value="Lumazine synthase"/>
    <property type="match status" value="1"/>
</dbReference>
<accession>A3DLT5</accession>
<protein>
    <recommendedName>
        <fullName evidence="1">6,7-dimethyl-8-ribityllumazine synthase</fullName>
        <shortName evidence="1">DMRL synthase</shortName>
        <shortName evidence="1">LS</shortName>
        <shortName evidence="1">Lumazine synthase</shortName>
        <ecNumber evidence="1">2.5.1.78</ecNumber>
    </recommendedName>
</protein>
<evidence type="ECO:0000255" key="1">
    <source>
        <dbReference type="HAMAP-Rule" id="MF_00178"/>
    </source>
</evidence>
<keyword id="KW-1185">Reference proteome</keyword>
<keyword id="KW-0686">Riboflavin biosynthesis</keyword>
<keyword id="KW-0808">Transferase</keyword>
<organism>
    <name type="scientific">Staphylothermus marinus (strain ATCC 43588 / DSM 3639 / JCM 9404 / F1)</name>
    <dbReference type="NCBI Taxonomy" id="399550"/>
    <lineage>
        <taxon>Archaea</taxon>
        <taxon>Thermoproteota</taxon>
        <taxon>Thermoprotei</taxon>
        <taxon>Desulfurococcales</taxon>
        <taxon>Desulfurococcaceae</taxon>
        <taxon>Staphylothermus</taxon>
    </lineage>
</organism>
<feature type="chain" id="PRO_1000040525" description="6,7-dimethyl-8-ribityllumazine synthase">
    <location>
        <begin position="1"/>
        <end position="150"/>
    </location>
</feature>
<feature type="active site" description="Proton donor" evidence="1">
    <location>
        <position position="75"/>
    </location>
</feature>
<feature type="binding site" evidence="1">
    <location>
        <position position="11"/>
    </location>
    <ligand>
        <name>5-amino-6-(D-ribitylamino)uracil</name>
        <dbReference type="ChEBI" id="CHEBI:15934"/>
    </ligand>
</feature>
<feature type="binding site" evidence="1">
    <location>
        <begin position="43"/>
        <end position="45"/>
    </location>
    <ligand>
        <name>5-amino-6-(D-ribitylamino)uracil</name>
        <dbReference type="ChEBI" id="CHEBI:15934"/>
    </ligand>
</feature>
<feature type="binding site" evidence="1">
    <location>
        <begin position="67"/>
        <end position="69"/>
    </location>
    <ligand>
        <name>5-amino-6-(D-ribitylamino)uracil</name>
        <dbReference type="ChEBI" id="CHEBI:15934"/>
    </ligand>
</feature>
<feature type="binding site" evidence="1">
    <location>
        <begin position="72"/>
        <end position="73"/>
    </location>
    <ligand>
        <name>(2S)-2-hydroxy-3-oxobutyl phosphate</name>
        <dbReference type="ChEBI" id="CHEBI:58830"/>
    </ligand>
</feature>
<feature type="binding site" evidence="1">
    <location>
        <position position="100"/>
    </location>
    <ligand>
        <name>5-amino-6-(D-ribitylamino)uracil</name>
        <dbReference type="ChEBI" id="CHEBI:15934"/>
    </ligand>
</feature>
<feature type="binding site" evidence="1">
    <location>
        <position position="115"/>
    </location>
    <ligand>
        <name>(2S)-2-hydroxy-3-oxobutyl phosphate</name>
        <dbReference type="ChEBI" id="CHEBI:58830"/>
    </ligand>
</feature>
<sequence length="150" mass="16577">MARIGIVVSEFNYDITYLMLQKAISHARFLGLEITYVFKVPGTYEIPFAVANLLKRNDVDGVVALGAVIKGATKHDELVASQTARKLMDLMIQYGKPVGLGIIGPGATRMQALERVEDYARRAVEAVAKMINRSKSLEEKKFAGETVFIE</sequence>
<gene>
    <name evidence="1" type="primary">ribH</name>
    <name type="ordered locus">Smar_0487</name>
</gene>
<name>RISB_STAMF</name>
<comment type="function">
    <text evidence="1">Catalyzes the formation of 6,7-dimethyl-8-ribityllumazine by condensation of 5-amino-6-(D-ribitylamino)uracil with 3,4-dihydroxy-2-butanone 4-phosphate. This is the penultimate step in the biosynthesis of riboflavin.</text>
</comment>
<comment type="catalytic activity">
    <reaction evidence="1">
        <text>(2S)-2-hydroxy-3-oxobutyl phosphate + 5-amino-6-(D-ribitylamino)uracil = 6,7-dimethyl-8-(1-D-ribityl)lumazine + phosphate + 2 H2O + H(+)</text>
        <dbReference type="Rhea" id="RHEA:26152"/>
        <dbReference type="ChEBI" id="CHEBI:15377"/>
        <dbReference type="ChEBI" id="CHEBI:15378"/>
        <dbReference type="ChEBI" id="CHEBI:15934"/>
        <dbReference type="ChEBI" id="CHEBI:43474"/>
        <dbReference type="ChEBI" id="CHEBI:58201"/>
        <dbReference type="ChEBI" id="CHEBI:58830"/>
        <dbReference type="EC" id="2.5.1.78"/>
    </reaction>
</comment>
<comment type="pathway">
    <text evidence="1">Cofactor biosynthesis; riboflavin biosynthesis; riboflavin from 2-hydroxy-3-oxobutyl phosphate and 5-amino-6-(D-ribitylamino)uracil: step 1/2.</text>
</comment>
<comment type="similarity">
    <text evidence="1">Belongs to the DMRL synthase family.</text>
</comment>
<proteinExistence type="inferred from homology"/>